<dbReference type="GO" id="GO:0005576">
    <property type="term" value="C:extracellular region"/>
    <property type="evidence" value="ECO:0007669"/>
    <property type="project" value="UniProtKB-SubCell"/>
</dbReference>
<dbReference type="GO" id="GO:0007218">
    <property type="term" value="P:neuropeptide signaling pathway"/>
    <property type="evidence" value="ECO:0007669"/>
    <property type="project" value="UniProtKB-KW"/>
</dbReference>
<sequence length="8" mass="949">ADYLQLAR</sequence>
<organism>
    <name type="scientific">Striatophasma naukluftense</name>
    <name type="common">Gladiator</name>
    <name type="synonym">Heel-walker</name>
    <dbReference type="NCBI Taxonomy" id="1041429"/>
    <lineage>
        <taxon>Eukaryota</taxon>
        <taxon>Metazoa</taxon>
        <taxon>Ecdysozoa</taxon>
        <taxon>Arthropoda</taxon>
        <taxon>Hexapoda</taxon>
        <taxon>Insecta</taxon>
        <taxon>Pterygota</taxon>
        <taxon>Neoptera</taxon>
        <taxon>Polyneoptera</taxon>
        <taxon>Mantophasmatodea</taxon>
        <taxon>Austrophasmatidae</taxon>
        <taxon>Striatophasma</taxon>
    </lineage>
</organism>
<feature type="peptide" id="PRO_0000420739" description="Extended FMRFamide-2" evidence="3">
    <location>
        <begin position="1"/>
        <end position="8"/>
    </location>
</feature>
<feature type="modified residue" description="Arginine amide" evidence="3">
    <location>
        <position position="8"/>
    </location>
</feature>
<feature type="unsure residue" description="L or I" evidence="3">
    <location>
        <position position="4"/>
    </location>
</feature>
<feature type="unsure residue" description="L or I" evidence="3">
    <location>
        <position position="6"/>
    </location>
</feature>
<keyword id="KW-0027">Amidation</keyword>
<keyword id="KW-0903">Direct protein sequencing</keyword>
<keyword id="KW-0527">Neuropeptide</keyword>
<keyword id="KW-0964">Secreted</keyword>
<name>FAR2_STRNA</name>
<comment type="function">
    <text evidence="1">FMRFamides and FMRFamide-like peptides are neuropeptides.</text>
</comment>
<comment type="subcellular location">
    <subcellularLocation>
        <location evidence="6">Secreted</location>
    </subcellularLocation>
</comment>
<comment type="similarity">
    <text evidence="2">Belongs to the FARP (FMRF amide related peptide) family.</text>
</comment>
<proteinExistence type="evidence at protein level"/>
<protein>
    <recommendedName>
        <fullName evidence="4">Extended FMRFamide-2</fullName>
        <shortName evidence="4">FMRFa-2</shortName>
    </recommendedName>
</protein>
<accession>B0M3A1</accession>
<evidence type="ECO:0000250" key="1">
    <source>
        <dbReference type="UniProtKB" id="P34405"/>
    </source>
</evidence>
<evidence type="ECO:0000255" key="2"/>
<evidence type="ECO:0000269" key="3">
    <source>
    </source>
</evidence>
<evidence type="ECO:0000303" key="4">
    <source>
    </source>
</evidence>
<evidence type="ECO:0000305" key="5"/>
<evidence type="ECO:0000305" key="6">
    <source>
    </source>
</evidence>
<reference evidence="5" key="1">
    <citation type="journal article" date="2012" name="Syst. Biol.">
        <title>Peptidomics-based phylogeny and biogeography of Mantophasmatodea (Hexapoda).</title>
        <authorList>
            <person name="Predel R."/>
            <person name="Neupert S."/>
            <person name="Huetteroth W."/>
            <person name="Kahnt J."/>
            <person name="Waidelich D."/>
            <person name="Roth S."/>
        </authorList>
    </citation>
    <scope>PROTEIN SEQUENCE</scope>
    <scope>AMIDATION AT ARG-8</scope>
    <source>
        <tissue evidence="3">Thoracic perisympathetic organs</tissue>
    </source>
</reference>